<reference key="1">
    <citation type="journal article" date="1995" name="Gene">
        <title>Cloning, sequencing and expression of serine/threonine kinase-encoding genes from Streptomyces coelicolor A3(2).</title>
        <authorList>
            <person name="Urabe H."/>
            <person name="Ogawara H."/>
        </authorList>
    </citation>
    <scope>NUCLEOTIDE SEQUENCE [GENOMIC DNA]</scope>
    <source>
        <strain>A3(2) / NRRL B-16638</strain>
    </source>
</reference>
<reference key="2">
    <citation type="journal article" date="2002" name="Nature">
        <title>Complete genome sequence of the model actinomycete Streptomyces coelicolor A3(2).</title>
        <authorList>
            <person name="Bentley S.D."/>
            <person name="Chater K.F."/>
            <person name="Cerdeno-Tarraga A.-M."/>
            <person name="Challis G.L."/>
            <person name="Thomson N.R."/>
            <person name="James K.D."/>
            <person name="Harris D.E."/>
            <person name="Quail M.A."/>
            <person name="Kieser H."/>
            <person name="Harper D."/>
            <person name="Bateman A."/>
            <person name="Brown S."/>
            <person name="Chandra G."/>
            <person name="Chen C.W."/>
            <person name="Collins M."/>
            <person name="Cronin A."/>
            <person name="Fraser A."/>
            <person name="Goble A."/>
            <person name="Hidalgo J."/>
            <person name="Hornsby T."/>
            <person name="Howarth S."/>
            <person name="Huang C.-H."/>
            <person name="Kieser T."/>
            <person name="Larke L."/>
            <person name="Murphy L.D."/>
            <person name="Oliver K."/>
            <person name="O'Neil S."/>
            <person name="Rabbinowitsch E."/>
            <person name="Rajandream M.A."/>
            <person name="Rutherford K.M."/>
            <person name="Rutter S."/>
            <person name="Seeger K."/>
            <person name="Saunders D."/>
            <person name="Sharp S."/>
            <person name="Squares R."/>
            <person name="Squares S."/>
            <person name="Taylor K."/>
            <person name="Warren T."/>
            <person name="Wietzorrek A."/>
            <person name="Woodward J.R."/>
            <person name="Barrell B.G."/>
            <person name="Parkhill J."/>
            <person name="Hopwood D.A."/>
        </authorList>
    </citation>
    <scope>NUCLEOTIDE SEQUENCE [LARGE SCALE GENOMIC DNA]</scope>
    <source>
        <strain>ATCC BAA-471 / A3(2) / M145</strain>
    </source>
</reference>
<feature type="chain" id="PRO_0000171232" description="Serine/threonine-protein kinase PkaA">
    <location>
        <begin position="1"/>
        <end position="543"/>
    </location>
</feature>
<feature type="domain" description="Protein kinase" evidence="1">
    <location>
        <begin position="8"/>
        <end position="276"/>
    </location>
</feature>
<feature type="region of interest" description="Disordered" evidence="3">
    <location>
        <begin position="303"/>
        <end position="480"/>
    </location>
</feature>
<feature type="compositionally biased region" description="Pro residues" evidence="3">
    <location>
        <begin position="352"/>
        <end position="361"/>
    </location>
</feature>
<feature type="compositionally biased region" description="Low complexity" evidence="3">
    <location>
        <begin position="407"/>
        <end position="420"/>
    </location>
</feature>
<feature type="compositionally biased region" description="Low complexity" evidence="3">
    <location>
        <begin position="428"/>
        <end position="451"/>
    </location>
</feature>
<feature type="compositionally biased region" description="Pro residues" evidence="3">
    <location>
        <begin position="452"/>
        <end position="461"/>
    </location>
</feature>
<feature type="active site" description="Proton acceptor" evidence="1 2">
    <location>
        <position position="142"/>
    </location>
</feature>
<feature type="binding site" evidence="1">
    <location>
        <begin position="14"/>
        <end position="22"/>
    </location>
    <ligand>
        <name>ATP</name>
        <dbReference type="ChEBI" id="CHEBI:30616"/>
    </ligand>
</feature>
<feature type="binding site" evidence="1">
    <location>
        <position position="48"/>
    </location>
    <ligand>
        <name>ATP</name>
        <dbReference type="ChEBI" id="CHEBI:30616"/>
    </ligand>
</feature>
<sequence length="543" mass="58182">MRPVGSKYLLEEPLGRGATGTVWRARQRETAGAEAAVAGQPGETVAIKVLKEELASDADIVMRFLRERSVLLRLTHPNIVRVRDLVVEGELLALVMDLIDGPDLHRYLRENGPLTPVAAALLTAQIADALAASHADGVVHRDLKPANVLLKQTGGEMHPMLTDFGIARLADSPGLTRTHEFVGTPAYVAPESAEGRPQTSAVDVYGAGILLYELVTGRPPFGGGSALEVLHQHLSAEPRRPSTVPDPLWTVIERCLRKNPDDRPSAENLARGLRVVAEGIGVHANSAQIGAAENVGALLAPDPAPAQVPGAPDAAYDPNGATSVLPHTSGPAGAADPTAVLPSTGAPDPTAVMPPVPPGQPGAPGQGGPEDPHPWQNQLRAARDRNEQTQVQYLDPNQDPLRRRPQRQVSRPPQQPRQAPQGPPPQQPGYGYPQQQQPQRYATPQPQQPQRYAPPPAPEPQQPRREPRPPRQRSANPMRIPGLGCLKGCLVTVVVLFVAGWLVWELSPLQEWIGTGKGYWDQLTDWFTTVTDWIGDLGGSGGG</sequence>
<dbReference type="EC" id="2.7.11.1"/>
<dbReference type="EMBL" id="D86821">
    <property type="protein sequence ID" value="BAA13168.1"/>
    <property type="molecule type" value="Genomic_DNA"/>
</dbReference>
<dbReference type="EMBL" id="AL939114">
    <property type="protein sequence ID" value="CAB87324.1"/>
    <property type="molecule type" value="Genomic_DNA"/>
</dbReference>
<dbReference type="PIR" id="JC4070">
    <property type="entry name" value="JC4070"/>
</dbReference>
<dbReference type="RefSeq" id="NP_627197.1">
    <property type="nucleotide sequence ID" value="NC_003888.3"/>
</dbReference>
<dbReference type="RefSeq" id="WP_003975838.1">
    <property type="nucleotide sequence ID" value="NZ_VNID01000010.1"/>
</dbReference>
<dbReference type="SMR" id="P54739"/>
<dbReference type="STRING" id="100226.gene:17760586"/>
<dbReference type="PaxDb" id="100226-SCO2974"/>
<dbReference type="KEGG" id="sco:SCO2974"/>
<dbReference type="PATRIC" id="fig|100226.15.peg.3032"/>
<dbReference type="eggNOG" id="COG0515">
    <property type="taxonomic scope" value="Bacteria"/>
</dbReference>
<dbReference type="HOGENOM" id="CLU_000288_63_44_11"/>
<dbReference type="InParanoid" id="P54739"/>
<dbReference type="OrthoDB" id="9762169at2"/>
<dbReference type="PhylomeDB" id="P54739"/>
<dbReference type="BRENDA" id="2.7.11.1">
    <property type="organism ID" value="5998"/>
</dbReference>
<dbReference type="Proteomes" id="UP000001973">
    <property type="component" value="Chromosome"/>
</dbReference>
<dbReference type="GO" id="GO:0005524">
    <property type="term" value="F:ATP binding"/>
    <property type="evidence" value="ECO:0007669"/>
    <property type="project" value="UniProtKB-KW"/>
</dbReference>
<dbReference type="GO" id="GO:0106310">
    <property type="term" value="F:protein serine kinase activity"/>
    <property type="evidence" value="ECO:0007669"/>
    <property type="project" value="RHEA"/>
</dbReference>
<dbReference type="GO" id="GO:0004674">
    <property type="term" value="F:protein serine/threonine kinase activity"/>
    <property type="evidence" value="ECO:0000318"/>
    <property type="project" value="GO_Central"/>
</dbReference>
<dbReference type="CDD" id="cd14014">
    <property type="entry name" value="STKc_PknB_like"/>
    <property type="match status" value="1"/>
</dbReference>
<dbReference type="Gene3D" id="1.10.510.10">
    <property type="entry name" value="Transferase(Phosphotransferase) domain 1"/>
    <property type="match status" value="1"/>
</dbReference>
<dbReference type="InterPro" id="IPR011009">
    <property type="entry name" value="Kinase-like_dom_sf"/>
</dbReference>
<dbReference type="InterPro" id="IPR000719">
    <property type="entry name" value="Prot_kinase_dom"/>
</dbReference>
<dbReference type="InterPro" id="IPR008271">
    <property type="entry name" value="Ser/Thr_kinase_AS"/>
</dbReference>
<dbReference type="PANTHER" id="PTHR43289">
    <property type="entry name" value="MITOGEN-ACTIVATED PROTEIN KINASE KINASE KINASE 20-RELATED"/>
    <property type="match status" value="1"/>
</dbReference>
<dbReference type="PANTHER" id="PTHR43289:SF6">
    <property type="entry name" value="SERINE_THREONINE-PROTEIN KINASE NEKL-3"/>
    <property type="match status" value="1"/>
</dbReference>
<dbReference type="Pfam" id="PF00069">
    <property type="entry name" value="Pkinase"/>
    <property type="match status" value="1"/>
</dbReference>
<dbReference type="SMART" id="SM00220">
    <property type="entry name" value="S_TKc"/>
    <property type="match status" value="1"/>
</dbReference>
<dbReference type="SUPFAM" id="SSF56112">
    <property type="entry name" value="Protein kinase-like (PK-like)"/>
    <property type="match status" value="1"/>
</dbReference>
<dbReference type="PROSITE" id="PS50011">
    <property type="entry name" value="PROTEIN_KINASE_DOM"/>
    <property type="match status" value="1"/>
</dbReference>
<dbReference type="PROSITE" id="PS00108">
    <property type="entry name" value="PROTEIN_KINASE_ST"/>
    <property type="match status" value="1"/>
</dbReference>
<comment type="catalytic activity">
    <reaction>
        <text>L-seryl-[protein] + ATP = O-phospho-L-seryl-[protein] + ADP + H(+)</text>
        <dbReference type="Rhea" id="RHEA:17989"/>
        <dbReference type="Rhea" id="RHEA-COMP:9863"/>
        <dbReference type="Rhea" id="RHEA-COMP:11604"/>
        <dbReference type="ChEBI" id="CHEBI:15378"/>
        <dbReference type="ChEBI" id="CHEBI:29999"/>
        <dbReference type="ChEBI" id="CHEBI:30616"/>
        <dbReference type="ChEBI" id="CHEBI:83421"/>
        <dbReference type="ChEBI" id="CHEBI:456216"/>
        <dbReference type="EC" id="2.7.11.1"/>
    </reaction>
</comment>
<comment type="catalytic activity">
    <reaction>
        <text>L-threonyl-[protein] + ATP = O-phospho-L-threonyl-[protein] + ADP + H(+)</text>
        <dbReference type="Rhea" id="RHEA:46608"/>
        <dbReference type="Rhea" id="RHEA-COMP:11060"/>
        <dbReference type="Rhea" id="RHEA-COMP:11605"/>
        <dbReference type="ChEBI" id="CHEBI:15378"/>
        <dbReference type="ChEBI" id="CHEBI:30013"/>
        <dbReference type="ChEBI" id="CHEBI:30616"/>
        <dbReference type="ChEBI" id="CHEBI:61977"/>
        <dbReference type="ChEBI" id="CHEBI:456216"/>
        <dbReference type="EC" id="2.7.11.1"/>
    </reaction>
</comment>
<comment type="PTM">
    <text>Autophosphorylated mainly at Thr and slightly at Ser.</text>
</comment>
<comment type="similarity">
    <text evidence="1">Belongs to the protein kinase superfamily. Ser/Thr protein kinase family.</text>
</comment>
<gene>
    <name type="primary">pkaA</name>
    <name type="ordered locus">SCO2974</name>
    <name type="ORF">SCE50.02c</name>
</gene>
<keyword id="KW-0067">ATP-binding</keyword>
<keyword id="KW-0418">Kinase</keyword>
<keyword id="KW-0547">Nucleotide-binding</keyword>
<keyword id="KW-0597">Phosphoprotein</keyword>
<keyword id="KW-1185">Reference proteome</keyword>
<keyword id="KW-0723">Serine/threonine-protein kinase</keyword>
<keyword id="KW-0808">Transferase</keyword>
<evidence type="ECO:0000255" key="1">
    <source>
        <dbReference type="PROSITE-ProRule" id="PRU00159"/>
    </source>
</evidence>
<evidence type="ECO:0000255" key="2">
    <source>
        <dbReference type="PROSITE-ProRule" id="PRU10027"/>
    </source>
</evidence>
<evidence type="ECO:0000256" key="3">
    <source>
        <dbReference type="SAM" id="MobiDB-lite"/>
    </source>
</evidence>
<protein>
    <recommendedName>
        <fullName>Serine/threonine-protein kinase PkaA</fullName>
        <ecNumber>2.7.11.1</ecNumber>
    </recommendedName>
</protein>
<organism>
    <name type="scientific">Streptomyces coelicolor (strain ATCC BAA-471 / A3(2) / M145)</name>
    <dbReference type="NCBI Taxonomy" id="100226"/>
    <lineage>
        <taxon>Bacteria</taxon>
        <taxon>Bacillati</taxon>
        <taxon>Actinomycetota</taxon>
        <taxon>Actinomycetes</taxon>
        <taxon>Kitasatosporales</taxon>
        <taxon>Streptomycetaceae</taxon>
        <taxon>Streptomyces</taxon>
        <taxon>Streptomyces albidoflavus group</taxon>
    </lineage>
</organism>
<proteinExistence type="inferred from homology"/>
<name>PKAA_STRCO</name>
<accession>P54739</accession>